<sequence length="309" mass="33786">MATELQCPDSMPCHNQQVNSASTPSPEQLRPGDLILDHAGGNRASRAKVILLTGYAHSSLPAELDSGACGGSSLNSEGNSGSGDSSSYDAPAGNSFLEDCELSRQIGAQLKLLPMNDQIRELQTIIRDKTASRGDFMFSADRLIRLVVEEGLNQLPYKECMVTTPTGYKYEGVKFEKGNCGVSIMRSGEAMEQGLRDCCRSIRIGKILIQSDEETQRAKVYYAKFPPDIYRRKVLLMYPILSTGNTVIEAVKVLIEHGVQPSVIILLSLFSTPHGAKSIIQEFPEITILTTEVHPVAPTHFGQKYFGTD</sequence>
<organism>
    <name type="scientific">Homo sapiens</name>
    <name type="common">Human</name>
    <dbReference type="NCBI Taxonomy" id="9606"/>
    <lineage>
        <taxon>Eukaryota</taxon>
        <taxon>Metazoa</taxon>
        <taxon>Chordata</taxon>
        <taxon>Craniata</taxon>
        <taxon>Vertebrata</taxon>
        <taxon>Euteleostomi</taxon>
        <taxon>Mammalia</taxon>
        <taxon>Eutheria</taxon>
        <taxon>Euarchontoglires</taxon>
        <taxon>Primates</taxon>
        <taxon>Haplorrhini</taxon>
        <taxon>Catarrhini</taxon>
        <taxon>Hominidae</taxon>
        <taxon>Homo</taxon>
    </lineage>
</organism>
<keyword id="KW-0025">Alternative splicing</keyword>
<keyword id="KW-0963">Cytoplasm</keyword>
<keyword id="KW-0342">GTP-binding</keyword>
<keyword id="KW-0547">Nucleotide-binding</keyword>
<keyword id="KW-0539">Nucleus</keyword>
<keyword id="KW-0597">Phosphoprotein</keyword>
<keyword id="KW-1267">Proteomics identification</keyword>
<keyword id="KW-1185">Reference proteome</keyword>
<comment type="interaction">
    <interactant intactId="EBI-742943">
        <id>Q96BW1</id>
    </interactant>
    <interactant intactId="EBI-1550112">
        <id>Q8N668</id>
        <label>COMMD1</label>
    </interactant>
    <organismsDiffer>false</organismsDiffer>
    <experiments>3</experiments>
</comment>
<comment type="interaction">
    <interactant intactId="EBI-742943">
        <id>Q96BW1</id>
    </interactant>
    <interactant intactId="EBI-711389">
        <id>P84090</id>
        <label>ERH</label>
    </interactant>
    <organismsDiffer>false</organismsDiffer>
    <experiments>3</experiments>
</comment>
<comment type="interaction">
    <interactant intactId="EBI-742943">
        <id>Q96BW1</id>
    </interactant>
    <interactant intactId="EBI-12075758">
        <id>Q9NZ52-2</id>
        <label>GGA3</label>
    </interactant>
    <organismsDiffer>false</organismsDiffer>
    <experiments>3</experiments>
</comment>
<comment type="interaction">
    <interactant intactId="EBI-742943">
        <id>Q96BW1</id>
    </interactant>
    <interactant intactId="EBI-7116203">
        <id>O75031</id>
        <label>HSF2BP</label>
    </interactant>
    <organismsDiffer>false</organismsDiffer>
    <experiments>3</experiments>
</comment>
<comment type="interaction">
    <interactant intactId="EBI-742943">
        <id>Q96BW1</id>
    </interactant>
    <interactant intactId="EBI-399080">
        <id>Q92993</id>
        <label>KAT5</label>
    </interactant>
    <organismsDiffer>false</organismsDiffer>
    <experiments>3</experiments>
</comment>
<comment type="interaction">
    <interactant intactId="EBI-742943">
        <id>Q96BW1</id>
    </interactant>
    <interactant intactId="EBI-721544">
        <id>O75607</id>
        <label>NPM3</label>
    </interactant>
    <organismsDiffer>false</organismsDiffer>
    <experiments>3</experiments>
</comment>
<comment type="interaction">
    <interactant intactId="EBI-742943">
        <id>Q96BW1</id>
    </interactant>
    <interactant intactId="EBI-347928">
        <id>P62487</id>
        <label>POLR2G</label>
    </interactant>
    <organismsDiffer>false</organismsDiffer>
    <experiments>3</experiments>
</comment>
<comment type="interaction">
    <interactant intactId="EBI-742943">
        <id>Q96BW1</id>
    </interactant>
    <interactant intactId="EBI-368321">
        <id>O60437</id>
        <label>PPL</label>
    </interactant>
    <organismsDiffer>false</organismsDiffer>
    <experiments>3</experiments>
</comment>
<comment type="interaction">
    <interactant intactId="EBI-742943">
        <id>Q96BW1</id>
    </interactant>
    <interactant intactId="EBI-742933">
        <id>Q8WU10</id>
        <label>PYROXD1</label>
    </interactant>
    <organismsDiffer>false</organismsDiffer>
    <experiments>10</experiments>
</comment>
<comment type="subcellular location">
    <subcellularLocation>
        <location evidence="4">Cytoplasm</location>
    </subcellularLocation>
    <subcellularLocation>
        <location evidence="4">Nucleus</location>
    </subcellularLocation>
</comment>
<comment type="alternative products">
    <event type="alternative splicing"/>
    <isoform>
        <id>Q96BW1-1</id>
        <name>1</name>
        <sequence type="displayed"/>
    </isoform>
    <isoform>
        <id>Q96BW1-2</id>
        <name>2</name>
        <sequence type="described" ref="VSP_021206 VSP_021207"/>
    </isoform>
    <isoform>
        <id>Q96BW1-3</id>
        <name>3</name>
        <sequence type="described" ref="VSP_021205 VSP_021208 VSP_021209"/>
    </isoform>
</comment>
<comment type="tissue specificity">
    <text evidence="4">Highly expressed in leukocytes, liver, spleen and thymus, with lower expression in brain, lung and skeletal muscle.</text>
</comment>
<comment type="similarity">
    <text evidence="7">Belongs to the UPRTase family.</text>
</comment>
<comment type="caution">
    <text evidence="8">No UPRTase activity has been detected in vitro and the uracil binding region known from UPRTases is missing.</text>
</comment>
<proteinExistence type="evidence at protein level"/>
<reference key="1">
    <citation type="journal article" date="2007" name="J. Hum. Genet.">
        <title>Identification and characterization of human uracil phosphoribosyltransferase (UPRTase).</title>
        <authorList>
            <person name="Li J."/>
            <person name="Huang S."/>
            <person name="Chen J."/>
            <person name="Yang Z."/>
            <person name="Fei X."/>
            <person name="Zheng M."/>
            <person name="Ji C."/>
            <person name="Xie Y."/>
            <person name="Mao Y."/>
        </authorList>
    </citation>
    <scope>NUCLEOTIDE SEQUENCE [GENOMIC DNA]</scope>
    <scope>TISSUE SPECIFICITY</scope>
    <scope>SUBCELLULAR LOCATION</scope>
</reference>
<reference key="2">
    <citation type="journal article" date="2004" name="Nat. Genet.">
        <title>Complete sequencing and characterization of 21,243 full-length human cDNAs.</title>
        <authorList>
            <person name="Ota T."/>
            <person name="Suzuki Y."/>
            <person name="Nishikawa T."/>
            <person name="Otsuki T."/>
            <person name="Sugiyama T."/>
            <person name="Irie R."/>
            <person name="Wakamatsu A."/>
            <person name="Hayashi K."/>
            <person name="Sato H."/>
            <person name="Nagai K."/>
            <person name="Kimura K."/>
            <person name="Makita H."/>
            <person name="Sekine M."/>
            <person name="Obayashi M."/>
            <person name="Nishi T."/>
            <person name="Shibahara T."/>
            <person name="Tanaka T."/>
            <person name="Ishii S."/>
            <person name="Yamamoto J."/>
            <person name="Saito K."/>
            <person name="Kawai Y."/>
            <person name="Isono Y."/>
            <person name="Nakamura Y."/>
            <person name="Nagahari K."/>
            <person name="Murakami K."/>
            <person name="Yasuda T."/>
            <person name="Iwayanagi T."/>
            <person name="Wagatsuma M."/>
            <person name="Shiratori A."/>
            <person name="Sudo H."/>
            <person name="Hosoiri T."/>
            <person name="Kaku Y."/>
            <person name="Kodaira H."/>
            <person name="Kondo H."/>
            <person name="Sugawara M."/>
            <person name="Takahashi M."/>
            <person name="Kanda K."/>
            <person name="Yokoi T."/>
            <person name="Furuya T."/>
            <person name="Kikkawa E."/>
            <person name="Omura Y."/>
            <person name="Abe K."/>
            <person name="Kamihara K."/>
            <person name="Katsuta N."/>
            <person name="Sato K."/>
            <person name="Tanikawa M."/>
            <person name="Yamazaki M."/>
            <person name="Ninomiya K."/>
            <person name="Ishibashi T."/>
            <person name="Yamashita H."/>
            <person name="Murakawa K."/>
            <person name="Fujimori K."/>
            <person name="Tanai H."/>
            <person name="Kimata M."/>
            <person name="Watanabe M."/>
            <person name="Hiraoka S."/>
            <person name="Chiba Y."/>
            <person name="Ishida S."/>
            <person name="Ono Y."/>
            <person name="Takiguchi S."/>
            <person name="Watanabe S."/>
            <person name="Yosida M."/>
            <person name="Hotuta T."/>
            <person name="Kusano J."/>
            <person name="Kanehori K."/>
            <person name="Takahashi-Fujii A."/>
            <person name="Hara H."/>
            <person name="Tanase T.-O."/>
            <person name="Nomura Y."/>
            <person name="Togiya S."/>
            <person name="Komai F."/>
            <person name="Hara R."/>
            <person name="Takeuchi K."/>
            <person name="Arita M."/>
            <person name="Imose N."/>
            <person name="Musashino K."/>
            <person name="Yuuki H."/>
            <person name="Oshima A."/>
            <person name="Sasaki N."/>
            <person name="Aotsuka S."/>
            <person name="Yoshikawa Y."/>
            <person name="Matsunawa H."/>
            <person name="Ichihara T."/>
            <person name="Shiohata N."/>
            <person name="Sano S."/>
            <person name="Moriya S."/>
            <person name="Momiyama H."/>
            <person name="Satoh N."/>
            <person name="Takami S."/>
            <person name="Terashima Y."/>
            <person name="Suzuki O."/>
            <person name="Nakagawa S."/>
            <person name="Senoh A."/>
            <person name="Mizoguchi H."/>
            <person name="Goto Y."/>
            <person name="Shimizu F."/>
            <person name="Wakebe H."/>
            <person name="Hishigaki H."/>
            <person name="Watanabe T."/>
            <person name="Sugiyama A."/>
            <person name="Takemoto M."/>
            <person name="Kawakami B."/>
            <person name="Yamazaki M."/>
            <person name="Watanabe K."/>
            <person name="Kumagai A."/>
            <person name="Itakura S."/>
            <person name="Fukuzumi Y."/>
            <person name="Fujimori Y."/>
            <person name="Komiyama M."/>
            <person name="Tashiro H."/>
            <person name="Tanigami A."/>
            <person name="Fujiwara T."/>
            <person name="Ono T."/>
            <person name="Yamada K."/>
            <person name="Fujii Y."/>
            <person name="Ozaki K."/>
            <person name="Hirao M."/>
            <person name="Ohmori Y."/>
            <person name="Kawabata A."/>
            <person name="Hikiji T."/>
            <person name="Kobatake N."/>
            <person name="Inagaki H."/>
            <person name="Ikema Y."/>
            <person name="Okamoto S."/>
            <person name="Okitani R."/>
            <person name="Kawakami T."/>
            <person name="Noguchi S."/>
            <person name="Itoh T."/>
            <person name="Shigeta K."/>
            <person name="Senba T."/>
            <person name="Matsumura K."/>
            <person name="Nakajima Y."/>
            <person name="Mizuno T."/>
            <person name="Morinaga M."/>
            <person name="Sasaki M."/>
            <person name="Togashi T."/>
            <person name="Oyama M."/>
            <person name="Hata H."/>
            <person name="Watanabe M."/>
            <person name="Komatsu T."/>
            <person name="Mizushima-Sugano J."/>
            <person name="Satoh T."/>
            <person name="Shirai Y."/>
            <person name="Takahashi Y."/>
            <person name="Nakagawa K."/>
            <person name="Okumura K."/>
            <person name="Nagase T."/>
            <person name="Nomura N."/>
            <person name="Kikuchi H."/>
            <person name="Masuho Y."/>
            <person name="Yamashita R."/>
            <person name="Nakai K."/>
            <person name="Yada T."/>
            <person name="Nakamura Y."/>
            <person name="Ohara O."/>
            <person name="Isogai T."/>
            <person name="Sugano S."/>
        </authorList>
    </citation>
    <scope>NUCLEOTIDE SEQUENCE [LARGE SCALE MRNA] (ISOFORM 3)</scope>
</reference>
<reference key="3">
    <citation type="journal article" date="2007" name="BMC Genomics">
        <title>The full-ORF clone resource of the German cDNA consortium.</title>
        <authorList>
            <person name="Bechtel S."/>
            <person name="Rosenfelder H."/>
            <person name="Duda A."/>
            <person name="Schmidt C.P."/>
            <person name="Ernst U."/>
            <person name="Wellenreuther R."/>
            <person name="Mehrle A."/>
            <person name="Schuster C."/>
            <person name="Bahr A."/>
            <person name="Bloecker H."/>
            <person name="Heubner D."/>
            <person name="Hoerlein A."/>
            <person name="Michel G."/>
            <person name="Wedler H."/>
            <person name="Koehrer K."/>
            <person name="Ottenwaelder B."/>
            <person name="Poustka A."/>
            <person name="Wiemann S."/>
            <person name="Schupp I."/>
        </authorList>
    </citation>
    <scope>NUCLEOTIDE SEQUENCE [LARGE SCALE MRNA] (ISOFORM 2)</scope>
    <source>
        <tissue>Hippocampus</tissue>
    </source>
</reference>
<reference key="4">
    <citation type="journal article" date="2005" name="Nature">
        <title>The DNA sequence of the human X chromosome.</title>
        <authorList>
            <person name="Ross M.T."/>
            <person name="Grafham D.V."/>
            <person name="Coffey A.J."/>
            <person name="Scherer S."/>
            <person name="McLay K."/>
            <person name="Muzny D."/>
            <person name="Platzer M."/>
            <person name="Howell G.R."/>
            <person name="Burrows C."/>
            <person name="Bird C.P."/>
            <person name="Frankish A."/>
            <person name="Lovell F.L."/>
            <person name="Howe K.L."/>
            <person name="Ashurst J.L."/>
            <person name="Fulton R.S."/>
            <person name="Sudbrak R."/>
            <person name="Wen G."/>
            <person name="Jones M.C."/>
            <person name="Hurles M.E."/>
            <person name="Andrews T.D."/>
            <person name="Scott C.E."/>
            <person name="Searle S."/>
            <person name="Ramser J."/>
            <person name="Whittaker A."/>
            <person name="Deadman R."/>
            <person name="Carter N.P."/>
            <person name="Hunt S.E."/>
            <person name="Chen R."/>
            <person name="Cree A."/>
            <person name="Gunaratne P."/>
            <person name="Havlak P."/>
            <person name="Hodgson A."/>
            <person name="Metzker M.L."/>
            <person name="Richards S."/>
            <person name="Scott G."/>
            <person name="Steffen D."/>
            <person name="Sodergren E."/>
            <person name="Wheeler D.A."/>
            <person name="Worley K.C."/>
            <person name="Ainscough R."/>
            <person name="Ambrose K.D."/>
            <person name="Ansari-Lari M.A."/>
            <person name="Aradhya S."/>
            <person name="Ashwell R.I."/>
            <person name="Babbage A.K."/>
            <person name="Bagguley C.L."/>
            <person name="Ballabio A."/>
            <person name="Banerjee R."/>
            <person name="Barker G.E."/>
            <person name="Barlow K.F."/>
            <person name="Barrett I.P."/>
            <person name="Bates K.N."/>
            <person name="Beare D.M."/>
            <person name="Beasley H."/>
            <person name="Beasley O."/>
            <person name="Beck A."/>
            <person name="Bethel G."/>
            <person name="Blechschmidt K."/>
            <person name="Brady N."/>
            <person name="Bray-Allen S."/>
            <person name="Bridgeman A.M."/>
            <person name="Brown A.J."/>
            <person name="Brown M.J."/>
            <person name="Bonnin D."/>
            <person name="Bruford E.A."/>
            <person name="Buhay C."/>
            <person name="Burch P."/>
            <person name="Burford D."/>
            <person name="Burgess J."/>
            <person name="Burrill W."/>
            <person name="Burton J."/>
            <person name="Bye J.M."/>
            <person name="Carder C."/>
            <person name="Carrel L."/>
            <person name="Chako J."/>
            <person name="Chapman J.C."/>
            <person name="Chavez D."/>
            <person name="Chen E."/>
            <person name="Chen G."/>
            <person name="Chen Y."/>
            <person name="Chen Z."/>
            <person name="Chinault C."/>
            <person name="Ciccodicola A."/>
            <person name="Clark S.Y."/>
            <person name="Clarke G."/>
            <person name="Clee C.M."/>
            <person name="Clegg S."/>
            <person name="Clerc-Blankenburg K."/>
            <person name="Clifford K."/>
            <person name="Cobley V."/>
            <person name="Cole C.G."/>
            <person name="Conquer J.S."/>
            <person name="Corby N."/>
            <person name="Connor R.E."/>
            <person name="David R."/>
            <person name="Davies J."/>
            <person name="Davis C."/>
            <person name="Davis J."/>
            <person name="Delgado O."/>
            <person name="Deshazo D."/>
            <person name="Dhami P."/>
            <person name="Ding Y."/>
            <person name="Dinh H."/>
            <person name="Dodsworth S."/>
            <person name="Draper H."/>
            <person name="Dugan-Rocha S."/>
            <person name="Dunham A."/>
            <person name="Dunn M."/>
            <person name="Durbin K.J."/>
            <person name="Dutta I."/>
            <person name="Eades T."/>
            <person name="Ellwood M."/>
            <person name="Emery-Cohen A."/>
            <person name="Errington H."/>
            <person name="Evans K.L."/>
            <person name="Faulkner L."/>
            <person name="Francis F."/>
            <person name="Frankland J."/>
            <person name="Fraser A.E."/>
            <person name="Galgoczy P."/>
            <person name="Gilbert J."/>
            <person name="Gill R."/>
            <person name="Gloeckner G."/>
            <person name="Gregory S.G."/>
            <person name="Gribble S."/>
            <person name="Griffiths C."/>
            <person name="Grocock R."/>
            <person name="Gu Y."/>
            <person name="Gwilliam R."/>
            <person name="Hamilton C."/>
            <person name="Hart E.A."/>
            <person name="Hawes A."/>
            <person name="Heath P.D."/>
            <person name="Heitmann K."/>
            <person name="Hennig S."/>
            <person name="Hernandez J."/>
            <person name="Hinzmann B."/>
            <person name="Ho S."/>
            <person name="Hoffs M."/>
            <person name="Howden P.J."/>
            <person name="Huckle E.J."/>
            <person name="Hume J."/>
            <person name="Hunt P.J."/>
            <person name="Hunt A.R."/>
            <person name="Isherwood J."/>
            <person name="Jacob L."/>
            <person name="Johnson D."/>
            <person name="Jones S."/>
            <person name="de Jong P.J."/>
            <person name="Joseph S.S."/>
            <person name="Keenan S."/>
            <person name="Kelly S."/>
            <person name="Kershaw J.K."/>
            <person name="Khan Z."/>
            <person name="Kioschis P."/>
            <person name="Klages S."/>
            <person name="Knights A.J."/>
            <person name="Kosiura A."/>
            <person name="Kovar-Smith C."/>
            <person name="Laird G.K."/>
            <person name="Langford C."/>
            <person name="Lawlor S."/>
            <person name="Leversha M."/>
            <person name="Lewis L."/>
            <person name="Liu W."/>
            <person name="Lloyd C."/>
            <person name="Lloyd D.M."/>
            <person name="Loulseged H."/>
            <person name="Loveland J.E."/>
            <person name="Lovell J.D."/>
            <person name="Lozado R."/>
            <person name="Lu J."/>
            <person name="Lyne R."/>
            <person name="Ma J."/>
            <person name="Maheshwari M."/>
            <person name="Matthews L.H."/>
            <person name="McDowall J."/>
            <person name="McLaren S."/>
            <person name="McMurray A."/>
            <person name="Meidl P."/>
            <person name="Meitinger T."/>
            <person name="Milne S."/>
            <person name="Miner G."/>
            <person name="Mistry S.L."/>
            <person name="Morgan M."/>
            <person name="Morris S."/>
            <person name="Mueller I."/>
            <person name="Mullikin J.C."/>
            <person name="Nguyen N."/>
            <person name="Nordsiek G."/>
            <person name="Nyakatura G."/>
            <person name="O'dell C.N."/>
            <person name="Okwuonu G."/>
            <person name="Palmer S."/>
            <person name="Pandian R."/>
            <person name="Parker D."/>
            <person name="Parrish J."/>
            <person name="Pasternak S."/>
            <person name="Patel D."/>
            <person name="Pearce A.V."/>
            <person name="Pearson D.M."/>
            <person name="Pelan S.E."/>
            <person name="Perez L."/>
            <person name="Porter K.M."/>
            <person name="Ramsey Y."/>
            <person name="Reichwald K."/>
            <person name="Rhodes S."/>
            <person name="Ridler K.A."/>
            <person name="Schlessinger D."/>
            <person name="Schueler M.G."/>
            <person name="Sehra H.K."/>
            <person name="Shaw-Smith C."/>
            <person name="Shen H."/>
            <person name="Sheridan E.M."/>
            <person name="Shownkeen R."/>
            <person name="Skuce C.D."/>
            <person name="Smith M.L."/>
            <person name="Sotheran E.C."/>
            <person name="Steingruber H.E."/>
            <person name="Steward C.A."/>
            <person name="Storey R."/>
            <person name="Swann R.M."/>
            <person name="Swarbreck D."/>
            <person name="Tabor P.E."/>
            <person name="Taudien S."/>
            <person name="Taylor T."/>
            <person name="Teague B."/>
            <person name="Thomas K."/>
            <person name="Thorpe A."/>
            <person name="Timms K."/>
            <person name="Tracey A."/>
            <person name="Trevanion S."/>
            <person name="Tromans A.C."/>
            <person name="d'Urso M."/>
            <person name="Verduzco D."/>
            <person name="Villasana D."/>
            <person name="Waldron L."/>
            <person name="Wall M."/>
            <person name="Wang Q."/>
            <person name="Warren J."/>
            <person name="Warry G.L."/>
            <person name="Wei X."/>
            <person name="West A."/>
            <person name="Whitehead S.L."/>
            <person name="Whiteley M.N."/>
            <person name="Wilkinson J.E."/>
            <person name="Willey D.L."/>
            <person name="Williams G."/>
            <person name="Williams L."/>
            <person name="Williamson A."/>
            <person name="Williamson H."/>
            <person name="Wilming L."/>
            <person name="Woodmansey R.L."/>
            <person name="Wray P.W."/>
            <person name="Yen J."/>
            <person name="Zhang J."/>
            <person name="Zhou J."/>
            <person name="Zoghbi H."/>
            <person name="Zorilla S."/>
            <person name="Buck D."/>
            <person name="Reinhardt R."/>
            <person name="Poustka A."/>
            <person name="Rosenthal A."/>
            <person name="Lehrach H."/>
            <person name="Meindl A."/>
            <person name="Minx P.J."/>
            <person name="Hillier L.W."/>
            <person name="Willard H.F."/>
            <person name="Wilson R.K."/>
            <person name="Waterston R.H."/>
            <person name="Rice C.M."/>
            <person name="Vaudin M."/>
            <person name="Coulson A."/>
            <person name="Nelson D.L."/>
            <person name="Weinstock G."/>
            <person name="Sulston J.E."/>
            <person name="Durbin R.M."/>
            <person name="Hubbard T."/>
            <person name="Gibbs R.A."/>
            <person name="Beck S."/>
            <person name="Rogers J."/>
            <person name="Bentley D.R."/>
        </authorList>
    </citation>
    <scope>NUCLEOTIDE SEQUENCE [LARGE SCALE GENOMIC DNA]</scope>
    <scope>ALTERNATIVE SPLICING</scope>
</reference>
<reference key="5">
    <citation type="journal article" date="2004" name="Genome Res.">
        <title>The status, quality, and expansion of the NIH full-length cDNA project: the Mammalian Gene Collection (MGC).</title>
        <authorList>
            <consortium name="The MGC Project Team"/>
        </authorList>
    </citation>
    <scope>NUCLEOTIDE SEQUENCE [LARGE SCALE MRNA] (ISOFORM 1)</scope>
    <source>
        <tissue>Brain</tissue>
    </source>
</reference>
<gene>
    <name type="primary">UPRT</name>
</gene>
<accession>Q96BW1</accession>
<accession>Q5JRL1</accession>
<accession>Q5JRL3</accession>
<accession>Q68DN0</accession>
<accession>Q96MW2</accession>
<evidence type="ECO:0000250" key="1">
    <source>
        <dbReference type="UniProtKB" id="B1AVZ0"/>
    </source>
</evidence>
<evidence type="ECO:0000250" key="2">
    <source>
        <dbReference type="UniProtKB" id="Q26998"/>
    </source>
</evidence>
<evidence type="ECO:0000256" key="3">
    <source>
        <dbReference type="SAM" id="MobiDB-lite"/>
    </source>
</evidence>
<evidence type="ECO:0000269" key="4">
    <source>
    </source>
</evidence>
<evidence type="ECO:0000303" key="5">
    <source>
    </source>
</evidence>
<evidence type="ECO:0000303" key="6">
    <source>
    </source>
</evidence>
<evidence type="ECO:0000305" key="7"/>
<evidence type="ECO:0000305" key="8">
    <source>
    </source>
</evidence>
<feature type="chain" id="PRO_0000254535" description="Uracil phosphoribosyltransferase homolog">
    <location>
        <begin position="1"/>
        <end position="309"/>
    </location>
</feature>
<feature type="region of interest" description="Disordered" evidence="3">
    <location>
        <begin position="1"/>
        <end position="38"/>
    </location>
</feature>
<feature type="compositionally biased region" description="Polar residues" evidence="3">
    <location>
        <begin position="13"/>
        <end position="26"/>
    </location>
</feature>
<feature type="binding site" evidence="2">
    <location>
        <position position="133"/>
    </location>
    <ligand>
        <name>GTP</name>
        <dbReference type="ChEBI" id="CHEBI:37565"/>
    </ligand>
</feature>
<feature type="binding site" evidence="2">
    <location>
        <position position="142"/>
    </location>
    <ligand>
        <name>GTP</name>
        <dbReference type="ChEBI" id="CHEBI:37565"/>
    </ligand>
</feature>
<feature type="binding site" evidence="2">
    <location>
        <begin position="176"/>
        <end position="179"/>
    </location>
    <ligand>
        <name>GTP</name>
        <dbReference type="ChEBI" id="CHEBI:37565"/>
    </ligand>
</feature>
<feature type="binding site" evidence="2">
    <location>
        <position position="186"/>
    </location>
    <ligand>
        <name>5-phospho-alpha-D-ribose 1-diphosphate</name>
        <dbReference type="ChEBI" id="CHEBI:58017"/>
    </ligand>
</feature>
<feature type="binding site" evidence="2">
    <location>
        <position position="203"/>
    </location>
    <ligand>
        <name>GTP</name>
        <dbReference type="ChEBI" id="CHEBI:37565"/>
    </ligand>
</feature>
<feature type="binding site" evidence="2">
    <location>
        <position position="232"/>
    </location>
    <ligand>
        <name>GTP</name>
        <dbReference type="ChEBI" id="CHEBI:37565"/>
    </ligand>
</feature>
<feature type="binding site" evidence="2">
    <location>
        <begin position="238"/>
        <end position="246"/>
    </location>
    <ligand>
        <name>5-phospho-alpha-D-ribose 1-diphosphate</name>
        <dbReference type="ChEBI" id="CHEBI:58017"/>
    </ligand>
</feature>
<feature type="binding site" evidence="2">
    <location>
        <begin position="299"/>
        <end position="301"/>
    </location>
    <ligand>
        <name>uracil</name>
        <dbReference type="ChEBI" id="CHEBI:17568"/>
    </ligand>
</feature>
<feature type="modified residue" description="Phosphoserine" evidence="1">
    <location>
        <position position="25"/>
    </location>
</feature>
<feature type="splice variant" id="VSP_021205" description="In isoform 3." evidence="5">
    <location>
        <begin position="1"/>
        <end position="114"/>
    </location>
</feature>
<feature type="splice variant" id="VSP_021206" description="In isoform 2." evidence="6">
    <original>IRLVVEEGLNQLPYKECMVTTPTGYKYEGVKFE</original>
    <variation>VLPEDLFQKSIDNSCSAFHHQTCCGRGIESAAI</variation>
    <location>
        <begin position="144"/>
        <end position="176"/>
    </location>
</feature>
<feature type="splice variant" id="VSP_021207" description="In isoform 2." evidence="6">
    <location>
        <begin position="177"/>
        <end position="309"/>
    </location>
</feature>
<feature type="splice variant" id="VSP_021208" description="In isoform 3." evidence="5">
    <original>AKSIIQ</original>
    <variation>EFSMRQ</variation>
    <location>
        <begin position="276"/>
        <end position="281"/>
    </location>
</feature>
<feature type="splice variant" id="VSP_021209" description="In isoform 3." evidence="5">
    <location>
        <begin position="282"/>
        <end position="309"/>
    </location>
</feature>
<feature type="sequence conflict" description="In Ref. 3; CAH18190." evidence="7" ref="3">
    <original>T</original>
    <variation>A</variation>
    <location>
        <position position="130"/>
    </location>
</feature>
<protein>
    <recommendedName>
        <fullName>Uracil phosphoribosyltransferase homolog</fullName>
    </recommendedName>
</protein>
<name>UPP_HUMAN</name>
<dbReference type="EMBL" id="AK056354">
    <property type="status" value="NOT_ANNOTATED_CDS"/>
    <property type="molecule type" value="mRNA"/>
</dbReference>
<dbReference type="EMBL" id="CR749336">
    <property type="protein sequence ID" value="CAH18190.1"/>
    <property type="molecule type" value="mRNA"/>
</dbReference>
<dbReference type="EMBL" id="AL137013">
    <property type="status" value="NOT_ANNOTATED_CDS"/>
    <property type="molecule type" value="Genomic_DNA"/>
</dbReference>
<dbReference type="EMBL" id="AL590234">
    <property type="status" value="NOT_ANNOTATED_CDS"/>
    <property type="molecule type" value="Genomic_DNA"/>
</dbReference>
<dbReference type="EMBL" id="BC015116">
    <property type="protein sequence ID" value="AAH15116.1"/>
    <property type="molecule type" value="mRNA"/>
</dbReference>
<dbReference type="CCDS" id="CCDS14429.1">
    <molecule id="Q96BW1-1"/>
</dbReference>
<dbReference type="RefSeq" id="NP_659489.1">
    <molecule id="Q96BW1-1"/>
    <property type="nucleotide sequence ID" value="NM_145052.4"/>
</dbReference>
<dbReference type="SMR" id="Q96BW1"/>
<dbReference type="BioGRID" id="126576">
    <property type="interactions" value="22"/>
</dbReference>
<dbReference type="FunCoup" id="Q96BW1">
    <property type="interactions" value="2053"/>
</dbReference>
<dbReference type="IntAct" id="Q96BW1">
    <property type="interactions" value="21"/>
</dbReference>
<dbReference type="MINT" id="Q96BW1"/>
<dbReference type="STRING" id="9606.ENSP00000362481"/>
<dbReference type="GlyGen" id="Q96BW1">
    <property type="glycosylation" value="2 sites, 1 O-linked glycan (1 site)"/>
</dbReference>
<dbReference type="iPTMnet" id="Q96BW1"/>
<dbReference type="MetOSite" id="Q96BW1"/>
<dbReference type="PhosphoSitePlus" id="Q96BW1"/>
<dbReference type="BioMuta" id="UPRT"/>
<dbReference type="DMDM" id="74751783"/>
<dbReference type="jPOST" id="Q96BW1"/>
<dbReference type="MassIVE" id="Q96BW1"/>
<dbReference type="PaxDb" id="9606-ENSP00000362481"/>
<dbReference type="PeptideAtlas" id="Q96BW1"/>
<dbReference type="ProteomicsDB" id="76119">
    <molecule id="Q96BW1-1"/>
</dbReference>
<dbReference type="ProteomicsDB" id="76120">
    <molecule id="Q96BW1-2"/>
</dbReference>
<dbReference type="ProteomicsDB" id="76121">
    <molecule id="Q96BW1-3"/>
</dbReference>
<dbReference type="Pumba" id="Q96BW1"/>
<dbReference type="Antibodypedia" id="361">
    <property type="antibodies" value="293 antibodies from 18 providers"/>
</dbReference>
<dbReference type="DNASU" id="139596"/>
<dbReference type="Ensembl" id="ENST00000373383.9">
    <molecule id="Q96BW1-1"/>
    <property type="protein sequence ID" value="ENSP00000362481.4"/>
    <property type="gene ID" value="ENSG00000094841.14"/>
</dbReference>
<dbReference type="Ensembl" id="ENST00000462237.5">
    <molecule id="Q96BW1-2"/>
    <property type="protein sequence ID" value="ENSP00000433987.1"/>
    <property type="gene ID" value="ENSG00000094841.14"/>
</dbReference>
<dbReference type="GeneID" id="139596"/>
<dbReference type="KEGG" id="hsa:139596"/>
<dbReference type="MANE-Select" id="ENST00000373383.9">
    <property type="protein sequence ID" value="ENSP00000362481.4"/>
    <property type="RefSeq nucleotide sequence ID" value="NM_145052.4"/>
    <property type="RefSeq protein sequence ID" value="NP_659489.1"/>
</dbReference>
<dbReference type="UCSC" id="uc004ecb.3">
    <molecule id="Q96BW1-1"/>
    <property type="organism name" value="human"/>
</dbReference>
<dbReference type="AGR" id="HGNC:28334"/>
<dbReference type="CTD" id="139596"/>
<dbReference type="DisGeNET" id="139596"/>
<dbReference type="GeneCards" id="UPRT"/>
<dbReference type="HGNC" id="HGNC:28334">
    <property type="gene designation" value="UPRT"/>
</dbReference>
<dbReference type="HPA" id="ENSG00000094841">
    <property type="expression patterns" value="Low tissue specificity"/>
</dbReference>
<dbReference type="MIM" id="300656">
    <property type="type" value="gene"/>
</dbReference>
<dbReference type="neXtProt" id="NX_Q96BW1"/>
<dbReference type="OpenTargets" id="ENSG00000094841"/>
<dbReference type="PharmGKB" id="PA162408652"/>
<dbReference type="VEuPathDB" id="HostDB:ENSG00000094841"/>
<dbReference type="eggNOG" id="KOG1017">
    <property type="taxonomic scope" value="Eukaryota"/>
</dbReference>
<dbReference type="GeneTree" id="ENSGT01020000230412"/>
<dbReference type="HOGENOM" id="CLU_1606535_0_0_1"/>
<dbReference type="InParanoid" id="Q96BW1"/>
<dbReference type="OMA" id="NLFCTPM"/>
<dbReference type="OrthoDB" id="106623at2759"/>
<dbReference type="PAN-GO" id="Q96BW1">
    <property type="GO annotations" value="2 GO annotations based on evolutionary models"/>
</dbReference>
<dbReference type="PhylomeDB" id="Q96BW1"/>
<dbReference type="TreeFam" id="TF105900"/>
<dbReference type="BRENDA" id="2.4.2.9">
    <property type="organism ID" value="2681"/>
</dbReference>
<dbReference type="PathwayCommons" id="Q96BW1"/>
<dbReference type="SignaLink" id="Q96BW1"/>
<dbReference type="BioGRID-ORCS" id="139596">
    <property type="hits" value="10 hits in 781 CRISPR screens"/>
</dbReference>
<dbReference type="ChiTaRS" id="UPRT">
    <property type="organism name" value="human"/>
</dbReference>
<dbReference type="GenomeRNAi" id="139596"/>
<dbReference type="Pharos" id="Q96BW1">
    <property type="development level" value="Tbio"/>
</dbReference>
<dbReference type="PRO" id="PR:Q96BW1"/>
<dbReference type="Proteomes" id="UP000005640">
    <property type="component" value="Chromosome X"/>
</dbReference>
<dbReference type="RNAct" id="Q96BW1">
    <property type="molecule type" value="protein"/>
</dbReference>
<dbReference type="Bgee" id="ENSG00000094841">
    <property type="expression patterns" value="Expressed in cortical plate and 176 other cell types or tissues"/>
</dbReference>
<dbReference type="ExpressionAtlas" id="Q96BW1">
    <property type="expression patterns" value="baseline and differential"/>
</dbReference>
<dbReference type="GO" id="GO:0005737">
    <property type="term" value="C:cytoplasm"/>
    <property type="evidence" value="ECO:0000318"/>
    <property type="project" value="GO_Central"/>
</dbReference>
<dbReference type="GO" id="GO:0043231">
    <property type="term" value="C:intracellular membrane-bounded organelle"/>
    <property type="evidence" value="ECO:0000314"/>
    <property type="project" value="HPA"/>
</dbReference>
<dbReference type="GO" id="GO:0005654">
    <property type="term" value="C:nucleoplasm"/>
    <property type="evidence" value="ECO:0000314"/>
    <property type="project" value="HPA"/>
</dbReference>
<dbReference type="GO" id="GO:0005525">
    <property type="term" value="F:GTP binding"/>
    <property type="evidence" value="ECO:0007669"/>
    <property type="project" value="UniProtKB-KW"/>
</dbReference>
<dbReference type="GO" id="GO:0050262">
    <property type="term" value="F:ribosylnicotinamide kinase activity"/>
    <property type="evidence" value="ECO:0000318"/>
    <property type="project" value="GO_Central"/>
</dbReference>
<dbReference type="GO" id="GO:0061769">
    <property type="term" value="F:ribosylnicotinate kinase activity"/>
    <property type="evidence" value="ECO:0000318"/>
    <property type="project" value="GO_Central"/>
</dbReference>
<dbReference type="GO" id="GO:0007565">
    <property type="term" value="P:female pregnancy"/>
    <property type="evidence" value="ECO:0007669"/>
    <property type="project" value="Ensembl"/>
</dbReference>
<dbReference type="GO" id="GO:0007595">
    <property type="term" value="P:lactation"/>
    <property type="evidence" value="ECO:0007669"/>
    <property type="project" value="Ensembl"/>
</dbReference>
<dbReference type="GO" id="GO:0032868">
    <property type="term" value="P:response to insulin"/>
    <property type="evidence" value="ECO:0007669"/>
    <property type="project" value="Ensembl"/>
</dbReference>
<dbReference type="GO" id="GO:0006222">
    <property type="term" value="P:UMP biosynthetic process"/>
    <property type="evidence" value="ECO:0007669"/>
    <property type="project" value="Ensembl"/>
</dbReference>
<dbReference type="CDD" id="cd06223">
    <property type="entry name" value="PRTases_typeI"/>
    <property type="match status" value="1"/>
</dbReference>
<dbReference type="FunFam" id="3.40.50.2020:FF:000026">
    <property type="entry name" value="Uracil phosphoribosyltransferase homolog"/>
    <property type="match status" value="1"/>
</dbReference>
<dbReference type="Gene3D" id="3.40.50.2020">
    <property type="match status" value="1"/>
</dbReference>
<dbReference type="InterPro" id="IPR000836">
    <property type="entry name" value="PRibTrfase_dom"/>
</dbReference>
<dbReference type="InterPro" id="IPR029057">
    <property type="entry name" value="PRTase-like"/>
</dbReference>
<dbReference type="Pfam" id="PF14681">
    <property type="entry name" value="UPRTase"/>
    <property type="match status" value="1"/>
</dbReference>
<dbReference type="SUPFAM" id="SSF53271">
    <property type="entry name" value="PRTase-like"/>
    <property type="match status" value="1"/>
</dbReference>